<name>PPR18_MACMU</name>
<dbReference type="EMBL" id="AB128049">
    <property type="protein sequence ID" value="BAD69760.1"/>
    <property type="molecule type" value="Genomic_DNA"/>
</dbReference>
<dbReference type="RefSeq" id="NP_001098634.1">
    <property type="nucleotide sequence ID" value="NM_001105164.1"/>
</dbReference>
<dbReference type="RefSeq" id="XP_014991336.1">
    <property type="nucleotide sequence ID" value="XM_015135850.1"/>
</dbReference>
<dbReference type="RefSeq" id="XP_028702626.1">
    <property type="nucleotide sequence ID" value="XM_028846793.1"/>
</dbReference>
<dbReference type="RefSeq" id="XP_028702627.1">
    <property type="nucleotide sequence ID" value="XM_028846794.1"/>
</dbReference>
<dbReference type="RefSeq" id="XP_028702628.1">
    <property type="nucleotide sequence ID" value="XM_028846795.1"/>
</dbReference>
<dbReference type="SMR" id="Q5TM66"/>
<dbReference type="FunCoup" id="Q5TM66">
    <property type="interactions" value="269"/>
</dbReference>
<dbReference type="STRING" id="9544.ENSMMUP00000055673"/>
<dbReference type="PaxDb" id="9544-ENSMMUP00000026249"/>
<dbReference type="Ensembl" id="ENSMMUT00000070396.2">
    <property type="protein sequence ID" value="ENSMMUP00000055673.2"/>
    <property type="gene ID" value="ENSMMUG00000019961.4"/>
</dbReference>
<dbReference type="GeneID" id="712176"/>
<dbReference type="KEGG" id="mcc:712176"/>
<dbReference type="CTD" id="170954"/>
<dbReference type="VEuPathDB" id="HostDB:ENSMMUG00000019961"/>
<dbReference type="VGNC" id="VGNC:104421">
    <property type="gene designation" value="PPP1R18"/>
</dbReference>
<dbReference type="eggNOG" id="ENOG502RY8Q">
    <property type="taxonomic scope" value="Eukaryota"/>
</dbReference>
<dbReference type="GeneTree" id="ENSGT00530000064035"/>
<dbReference type="InParanoid" id="Q5TM66"/>
<dbReference type="OMA" id="PGETPEW"/>
<dbReference type="OrthoDB" id="9945184at2759"/>
<dbReference type="Proteomes" id="UP000006718">
    <property type="component" value="Chromosome 4"/>
</dbReference>
<dbReference type="Bgee" id="ENSMMUG00000019961">
    <property type="expression patterns" value="Expressed in spleen and 22 other cell types or tissues"/>
</dbReference>
<dbReference type="ExpressionAtlas" id="Q5TM66">
    <property type="expression patterns" value="baseline and differential"/>
</dbReference>
<dbReference type="GO" id="GO:0005737">
    <property type="term" value="C:cytoplasm"/>
    <property type="evidence" value="ECO:0007669"/>
    <property type="project" value="UniProtKB-KW"/>
</dbReference>
<dbReference type="GO" id="GO:0005856">
    <property type="term" value="C:cytoskeleton"/>
    <property type="evidence" value="ECO:0007669"/>
    <property type="project" value="UniProtKB-SubCell"/>
</dbReference>
<dbReference type="GO" id="GO:0003779">
    <property type="term" value="F:actin binding"/>
    <property type="evidence" value="ECO:0007669"/>
    <property type="project" value="UniProtKB-KW"/>
</dbReference>
<dbReference type="GO" id="GO:0019902">
    <property type="term" value="F:phosphatase binding"/>
    <property type="evidence" value="ECO:0007669"/>
    <property type="project" value="InterPro"/>
</dbReference>
<dbReference type="InterPro" id="IPR025903">
    <property type="entry name" value="Phostensin/Taperin_N_dom"/>
</dbReference>
<dbReference type="InterPro" id="IPR025907">
    <property type="entry name" value="Phostensin/Taperin_PP1-bd_dom"/>
</dbReference>
<dbReference type="InterPro" id="IPR026671">
    <property type="entry name" value="PPP1R18/Tprn"/>
</dbReference>
<dbReference type="PANTHER" id="PTHR21685:SF0">
    <property type="entry name" value="PHOSTENSIN"/>
    <property type="match status" value="1"/>
</dbReference>
<dbReference type="PANTHER" id="PTHR21685">
    <property type="entry name" value="TON-B BOX DOMAIN"/>
    <property type="match status" value="1"/>
</dbReference>
<dbReference type="Pfam" id="PF13914">
    <property type="entry name" value="Phostensin"/>
    <property type="match status" value="1"/>
</dbReference>
<dbReference type="Pfam" id="PF13916">
    <property type="entry name" value="Phostensin_N"/>
    <property type="match status" value="1"/>
</dbReference>
<comment type="function">
    <text evidence="1">May target protein phosphatase 1 to F-actin cytoskeleton.</text>
</comment>
<comment type="subunit">
    <text evidence="1">Interacts with Protein phosphatase 1 (PP1).</text>
</comment>
<comment type="subcellular location">
    <subcellularLocation>
        <location evidence="1">Cytoplasm</location>
        <location evidence="1">Cytoskeleton</location>
    </subcellularLocation>
</comment>
<evidence type="ECO:0000250" key="1"/>
<evidence type="ECO:0000250" key="2">
    <source>
        <dbReference type="UniProtKB" id="Q6NYC8"/>
    </source>
</evidence>
<evidence type="ECO:0000250" key="3">
    <source>
        <dbReference type="UniProtKB" id="Q8BQ30"/>
    </source>
</evidence>
<evidence type="ECO:0000256" key="4">
    <source>
        <dbReference type="SAM" id="MobiDB-lite"/>
    </source>
</evidence>
<keyword id="KW-0007">Acetylation</keyword>
<keyword id="KW-0009">Actin-binding</keyword>
<keyword id="KW-0963">Cytoplasm</keyword>
<keyword id="KW-0206">Cytoskeleton</keyword>
<keyword id="KW-0597">Phosphoprotein</keyword>
<keyword id="KW-1185">Reference proteome</keyword>
<feature type="chain" id="PRO_0000050808" description="Phostensin">
    <location>
        <begin position="1"/>
        <end position="613"/>
    </location>
</feature>
<feature type="region of interest" description="Disordered" evidence="4">
    <location>
        <begin position="15"/>
        <end position="231"/>
    </location>
</feature>
<feature type="region of interest" description="Disordered" evidence="4">
    <location>
        <begin position="266"/>
        <end position="505"/>
    </location>
</feature>
<feature type="region of interest" description="Disordered" evidence="4">
    <location>
        <begin position="552"/>
        <end position="594"/>
    </location>
</feature>
<feature type="compositionally biased region" description="Basic and acidic residues" evidence="4">
    <location>
        <begin position="15"/>
        <end position="33"/>
    </location>
</feature>
<feature type="compositionally biased region" description="Basic and acidic residues" evidence="4">
    <location>
        <begin position="104"/>
        <end position="154"/>
    </location>
</feature>
<feature type="compositionally biased region" description="Basic and acidic residues" evidence="4">
    <location>
        <begin position="167"/>
        <end position="191"/>
    </location>
</feature>
<feature type="compositionally biased region" description="Basic and acidic residues" evidence="4">
    <location>
        <begin position="199"/>
        <end position="221"/>
    </location>
</feature>
<feature type="compositionally biased region" description="Basic and acidic residues" evidence="4">
    <location>
        <begin position="266"/>
        <end position="282"/>
    </location>
</feature>
<feature type="compositionally biased region" description="Polar residues" evidence="4">
    <location>
        <begin position="301"/>
        <end position="310"/>
    </location>
</feature>
<feature type="compositionally biased region" description="Basic and acidic residues" evidence="4">
    <location>
        <begin position="314"/>
        <end position="327"/>
    </location>
</feature>
<feature type="compositionally biased region" description="Basic and acidic residues" evidence="4">
    <location>
        <begin position="340"/>
        <end position="350"/>
    </location>
</feature>
<feature type="compositionally biased region" description="Basic and acidic residues" evidence="4">
    <location>
        <begin position="357"/>
        <end position="367"/>
    </location>
</feature>
<feature type="compositionally biased region" description="Pro residues" evidence="4">
    <location>
        <begin position="424"/>
        <end position="446"/>
    </location>
</feature>
<feature type="compositionally biased region" description="Low complexity" evidence="4">
    <location>
        <begin position="476"/>
        <end position="499"/>
    </location>
</feature>
<feature type="compositionally biased region" description="Pro residues" evidence="4">
    <location>
        <begin position="567"/>
        <end position="578"/>
    </location>
</feature>
<feature type="compositionally biased region" description="Acidic residues" evidence="4">
    <location>
        <begin position="580"/>
        <end position="589"/>
    </location>
</feature>
<feature type="modified residue" description="Phosphoserine" evidence="2">
    <location>
        <position position="54"/>
    </location>
</feature>
<feature type="modified residue" description="Phosphoserine" evidence="2">
    <location>
        <position position="125"/>
    </location>
</feature>
<feature type="modified residue" description="Phosphoserine" evidence="2">
    <location>
        <position position="133"/>
    </location>
</feature>
<feature type="modified residue" description="Phosphoserine" evidence="2">
    <location>
        <position position="175"/>
    </location>
</feature>
<feature type="modified residue" description="Phosphoserine" evidence="2">
    <location>
        <position position="195"/>
    </location>
</feature>
<feature type="modified residue" description="Phosphothreonine" evidence="2">
    <location>
        <position position="199"/>
    </location>
</feature>
<feature type="modified residue" description="Phosphoserine" evidence="2">
    <location>
        <position position="224"/>
    </location>
</feature>
<feature type="modified residue" description="Phosphoserine" evidence="2">
    <location>
        <position position="368"/>
    </location>
</feature>
<feature type="modified residue" description="Phosphoserine" evidence="3">
    <location>
        <position position="432"/>
    </location>
</feature>
<feature type="modified residue" description="N6-acetyllysine" evidence="3">
    <location>
        <position position="457"/>
    </location>
</feature>
<feature type="modified residue" description="Phosphoserine" evidence="2">
    <location>
        <position position="490"/>
    </location>
</feature>
<feature type="modified residue" description="Phosphoserine" evidence="3">
    <location>
        <position position="530"/>
    </location>
</feature>
<sequence length="613" mass="67999">MATIPDWKLQLLARRRQEEASVRGREKAERERLSQMPAWKRGLLERRRAKLGLSPGEPSPVPGTAEAGPPDPDESSVLLEAIGPVHQNRFIRQERQQQQQQQQRSEELLAERKPVPLEARERRPSPGEMRDQSPKGRESREERLSPRETRERRLGIGGAQESSLRPLEARDWRQSPGEVGDRSSRLSEPWKWRLSPGETPERSLRLAESREQSPRRKEVESRLSPGESAYQKLGLTEAHKWRPDSRESQEQSLVQLEATEWRLRSGEERQGYSEKCGRKEEWPVPGVAPEETTELSETLTREAQGSSSTGMEAAEQRPVEDGERGMKPAEGWKWTLNSGKAREWTPRDIEAQTQKPEPSESAEKRLESPSVEAGEGEAEKEEAGAQGRPLRALQNCCSVPSPLPPEDAGTGGLRQQEEEAVELQPPPPAPLSPPPPAPTAPQPPGDPLMSRLFYGVKAGPGVGAPRRSGHTFTVNPRRSVPPTTPATPTSPATADAAVPGAGKKRYPTAEEILVLGGYLRLSRSCLAKGSPERHHKQLKISFSETALETTYQYPSESSVLEELGPEPEVPSAPNPPAAQPDDEEDEEELLLLQPELQGGLRTKALIVDESCRR</sequence>
<protein>
    <recommendedName>
        <fullName>Phostensin</fullName>
    </recommendedName>
    <alternativeName>
        <fullName>Protein phosphatase 1 F-actin cytoskeleton-targeting subunit</fullName>
    </alternativeName>
    <alternativeName>
        <fullName>Protein phosphatase 1 regulatory subunit 18</fullName>
    </alternativeName>
</protein>
<reference key="1">
    <citation type="journal article" date="2004" name="Mol. Biol. Evol.">
        <title>Rhesus macaque class I duplicon structures, organization, and evolution within the alpha block of the major histocompatibility complex.</title>
        <authorList>
            <person name="Kulski J.K."/>
            <person name="Anzai T."/>
            <person name="Shiina T."/>
            <person name="Inoko H."/>
        </authorList>
    </citation>
    <scope>NUCLEOTIDE SEQUENCE [LARGE SCALE GENOMIC DNA]</scope>
</reference>
<proteinExistence type="inferred from homology"/>
<accession>Q5TM66</accession>
<gene>
    <name type="primary">PPP1R18</name>
</gene>
<organism>
    <name type="scientific">Macaca mulatta</name>
    <name type="common">Rhesus macaque</name>
    <dbReference type="NCBI Taxonomy" id="9544"/>
    <lineage>
        <taxon>Eukaryota</taxon>
        <taxon>Metazoa</taxon>
        <taxon>Chordata</taxon>
        <taxon>Craniata</taxon>
        <taxon>Vertebrata</taxon>
        <taxon>Euteleostomi</taxon>
        <taxon>Mammalia</taxon>
        <taxon>Eutheria</taxon>
        <taxon>Euarchontoglires</taxon>
        <taxon>Primates</taxon>
        <taxon>Haplorrhini</taxon>
        <taxon>Catarrhini</taxon>
        <taxon>Cercopithecidae</taxon>
        <taxon>Cercopithecinae</taxon>
        <taxon>Macaca</taxon>
    </lineage>
</organism>